<gene>
    <name evidence="1" type="primary">ppc</name>
    <name type="ordered locus">A9601_17821</name>
</gene>
<feature type="chain" id="PRO_1000025573" description="Phosphoenolpyruvate carboxylase">
    <location>
        <begin position="1"/>
        <end position="989"/>
    </location>
</feature>
<feature type="active site" evidence="1">
    <location>
        <position position="175"/>
    </location>
</feature>
<feature type="active site" evidence="1">
    <location>
        <position position="630"/>
    </location>
</feature>
<reference key="1">
    <citation type="journal article" date="2007" name="PLoS Genet.">
        <title>Patterns and implications of gene gain and loss in the evolution of Prochlorococcus.</title>
        <authorList>
            <person name="Kettler G.C."/>
            <person name="Martiny A.C."/>
            <person name="Huang K."/>
            <person name="Zucker J."/>
            <person name="Coleman M.L."/>
            <person name="Rodrigue S."/>
            <person name="Chen F."/>
            <person name="Lapidus A."/>
            <person name="Ferriera S."/>
            <person name="Johnson J."/>
            <person name="Steglich C."/>
            <person name="Church G.M."/>
            <person name="Richardson P."/>
            <person name="Chisholm S.W."/>
        </authorList>
    </citation>
    <scope>NUCLEOTIDE SEQUENCE [LARGE SCALE GENOMIC DNA]</scope>
    <source>
        <strain>AS9601</strain>
    </source>
</reference>
<organism>
    <name type="scientific">Prochlorococcus marinus (strain AS9601)</name>
    <dbReference type="NCBI Taxonomy" id="146891"/>
    <lineage>
        <taxon>Bacteria</taxon>
        <taxon>Bacillati</taxon>
        <taxon>Cyanobacteriota</taxon>
        <taxon>Cyanophyceae</taxon>
        <taxon>Synechococcales</taxon>
        <taxon>Prochlorococcaceae</taxon>
        <taxon>Prochlorococcus</taxon>
    </lineage>
</organism>
<dbReference type="EC" id="4.1.1.31" evidence="1"/>
<dbReference type="EMBL" id="CP000551">
    <property type="protein sequence ID" value="ABM71065.1"/>
    <property type="molecule type" value="Genomic_DNA"/>
</dbReference>
<dbReference type="RefSeq" id="WP_011819187.1">
    <property type="nucleotide sequence ID" value="NC_008816.1"/>
</dbReference>
<dbReference type="SMR" id="A2BTF4"/>
<dbReference type="STRING" id="146891.A9601_17821"/>
<dbReference type="KEGG" id="pmb:A9601_17821"/>
<dbReference type="eggNOG" id="COG2352">
    <property type="taxonomic scope" value="Bacteria"/>
</dbReference>
<dbReference type="HOGENOM" id="CLU_006557_2_0_3"/>
<dbReference type="OrthoDB" id="9768133at2"/>
<dbReference type="Proteomes" id="UP000002590">
    <property type="component" value="Chromosome"/>
</dbReference>
<dbReference type="GO" id="GO:0005829">
    <property type="term" value="C:cytosol"/>
    <property type="evidence" value="ECO:0007669"/>
    <property type="project" value="TreeGrafter"/>
</dbReference>
<dbReference type="GO" id="GO:0000287">
    <property type="term" value="F:magnesium ion binding"/>
    <property type="evidence" value="ECO:0007669"/>
    <property type="project" value="UniProtKB-UniRule"/>
</dbReference>
<dbReference type="GO" id="GO:0008964">
    <property type="term" value="F:phosphoenolpyruvate carboxylase activity"/>
    <property type="evidence" value="ECO:0007669"/>
    <property type="project" value="UniProtKB-UniRule"/>
</dbReference>
<dbReference type="GO" id="GO:0015977">
    <property type="term" value="P:carbon fixation"/>
    <property type="evidence" value="ECO:0007669"/>
    <property type="project" value="UniProtKB-UniRule"/>
</dbReference>
<dbReference type="GO" id="GO:0006107">
    <property type="term" value="P:oxaloacetate metabolic process"/>
    <property type="evidence" value="ECO:0007669"/>
    <property type="project" value="UniProtKB-UniRule"/>
</dbReference>
<dbReference type="GO" id="GO:0006099">
    <property type="term" value="P:tricarboxylic acid cycle"/>
    <property type="evidence" value="ECO:0007669"/>
    <property type="project" value="InterPro"/>
</dbReference>
<dbReference type="Gene3D" id="1.20.1440.90">
    <property type="entry name" value="Phosphoenolpyruvate/pyruvate domain"/>
    <property type="match status" value="1"/>
</dbReference>
<dbReference type="HAMAP" id="MF_00595">
    <property type="entry name" value="PEPcase_type1"/>
    <property type="match status" value="1"/>
</dbReference>
<dbReference type="InterPro" id="IPR021135">
    <property type="entry name" value="PEP_COase"/>
</dbReference>
<dbReference type="InterPro" id="IPR022805">
    <property type="entry name" value="PEP_COase_bac/pln-type"/>
</dbReference>
<dbReference type="InterPro" id="IPR018129">
    <property type="entry name" value="PEP_COase_Lys_AS"/>
</dbReference>
<dbReference type="InterPro" id="IPR033129">
    <property type="entry name" value="PEPCASE_His_AS"/>
</dbReference>
<dbReference type="InterPro" id="IPR015813">
    <property type="entry name" value="Pyrv/PenolPyrv_kinase-like_dom"/>
</dbReference>
<dbReference type="NCBIfam" id="NF000584">
    <property type="entry name" value="PRK00009.1"/>
    <property type="match status" value="1"/>
</dbReference>
<dbReference type="PANTHER" id="PTHR30523">
    <property type="entry name" value="PHOSPHOENOLPYRUVATE CARBOXYLASE"/>
    <property type="match status" value="1"/>
</dbReference>
<dbReference type="PANTHER" id="PTHR30523:SF6">
    <property type="entry name" value="PHOSPHOENOLPYRUVATE CARBOXYLASE"/>
    <property type="match status" value="1"/>
</dbReference>
<dbReference type="Pfam" id="PF00311">
    <property type="entry name" value="PEPcase"/>
    <property type="match status" value="1"/>
</dbReference>
<dbReference type="PRINTS" id="PR00150">
    <property type="entry name" value="PEPCARBXLASE"/>
</dbReference>
<dbReference type="SUPFAM" id="SSF51621">
    <property type="entry name" value="Phosphoenolpyruvate/pyruvate domain"/>
    <property type="match status" value="1"/>
</dbReference>
<dbReference type="PROSITE" id="PS00781">
    <property type="entry name" value="PEPCASE_1"/>
    <property type="match status" value="1"/>
</dbReference>
<dbReference type="PROSITE" id="PS00393">
    <property type="entry name" value="PEPCASE_2"/>
    <property type="match status" value="1"/>
</dbReference>
<comment type="function">
    <text evidence="1">Forms oxaloacetate, a four-carbon dicarboxylic acid source for the tricarboxylic acid cycle.</text>
</comment>
<comment type="catalytic activity">
    <reaction evidence="1">
        <text>oxaloacetate + phosphate = phosphoenolpyruvate + hydrogencarbonate</text>
        <dbReference type="Rhea" id="RHEA:28370"/>
        <dbReference type="ChEBI" id="CHEBI:16452"/>
        <dbReference type="ChEBI" id="CHEBI:17544"/>
        <dbReference type="ChEBI" id="CHEBI:43474"/>
        <dbReference type="ChEBI" id="CHEBI:58702"/>
        <dbReference type="EC" id="4.1.1.31"/>
    </reaction>
</comment>
<comment type="cofactor">
    <cofactor evidence="1">
        <name>Mg(2+)</name>
        <dbReference type="ChEBI" id="CHEBI:18420"/>
    </cofactor>
</comment>
<comment type="similarity">
    <text evidence="1">Belongs to the PEPCase type 1 family.</text>
</comment>
<keyword id="KW-0120">Carbon dioxide fixation</keyword>
<keyword id="KW-0456">Lyase</keyword>
<keyword id="KW-0460">Magnesium</keyword>
<protein>
    <recommendedName>
        <fullName evidence="1">Phosphoenolpyruvate carboxylase</fullName>
        <shortName evidence="1">PEPC</shortName>
        <shortName evidence="1">PEPCase</shortName>
        <ecNumber evidence="1">4.1.1.31</ecNumber>
    </recommendedName>
</protein>
<evidence type="ECO:0000255" key="1">
    <source>
        <dbReference type="HAMAP-Rule" id="MF_00595"/>
    </source>
</evidence>
<accession>A2BTF4</accession>
<name>CAPP_PROMS</name>
<sequence>MESFRQVKNNNVDLISNNDPLDKNRLLIEDLWESVLREECPDDQAERLIQLKELSYSKQIDGDSSKTFKNEIVDIVNSMDLAESIAAARAFSLYFQLVNILEQRVEEDRYIQSFTNKDVQKSPDNLDPFAPALARQNAPVTFRELFYRLRKLNVPPGKLEELLQEMDIRLVFTAHPTEIVRHTIRHKQTRVANLLKKIQIEQFLTKEEKNSLKTQLKEEVRLWWRTDELHQFKPSVLDEVDYALHYFQQVLFNAMPQLRGRIAEALTDNYPDVQLPSESFCNFGSWVGSDRDGNPSVTPEITWRTACYQRQLMLERYIIATSNLRDQLSVSMQWSQVSSSLLESLETDRVKFPEIYEARATRYRSEPYRLKLSYILEKLRLTQERNNLLADSGWKFDLEGETDNKNLDKVESLYYKSVKEFTYDLELIKNSLISTDLNCESVNTLLTQVHIFGFSLASLDIRQESTRHSDAIQELTNYLDLSVQYDQMSEEEKIKWLIDELNTKRPLIPSDVHWTKTTEETFSVFKMVKRLQQEFGSRICHSYVISMSHSASDLLEVLLLAKEMGLLDQNSQKSKLLVVPLFETVEDLKRAPEVMEKLFKLDFYRSLLPKVGESFKPLQELMLGYSDSNKDSGFVSSNWEIHRAQIALQNLSSRNNILLRLFHGRGGSVGRGGGPAYQAILAQPSGTLKGRIKITEQGEVLASKYSLPELALYNLETVTTAVIQNSLVNNRLDATPEWNQLMSRLAETSRSHYRKLVHENPDLLNFFQEVTPIEEISKLQISSRPARRKKGAKDLSSLRAIPWVFGWTQSRFLLPSWFGVGTALSSELNLDPQQIELLRVLHQRWPFFRMLISKVEMTLSKVDLEVARYYVDTLGSKENKDSFDNIFEVISKEYNLTKSLILEITGKNKLLESDRDLKSSVSLRNKTIIPLGFLQVSLLRRLRDQTRQPPISEFFLDKDESTRAYSRSELLRGALLTINGIAAGMRNTG</sequence>
<proteinExistence type="inferred from homology"/>